<accession>Q96NR3</accession>
<accession>B4DQH0</accession>
<accession>Q0IJ60</accession>
<accession>Q6P6B8</accession>
<gene>
    <name evidence="14" type="primary">PTCHD1</name>
</gene>
<sequence>MLRQVLHRGLRTCFSRLGHFIASHPVFFASAPVLISILLGASFSRYQVEESVEHLLAPQHSLAKIERNLVNSLFPVNRSKHRLYSDLQTPGRYGRVIVTSFQKANMLDQHHTDLILKLHAAVTKIQVPRPGFNYTFAHICILNNDKTCIVDDIVHVLEELKNARATNRTNFAITYPITHLKDGRAVYNGHQLGGVTVHSKDRVKSAEAIQLTYYLQSINSLNDMVAERWESSFCDTVRLFQKSNSKVKMYPYTSSSLREDFQKTSRVSERYLVTSLILVVTMAILCCSMQDCVRSKPWLGLLGLVTISLATLTAAGIINLTGGKYNSTFLGVPFVMLGHGLYGTFEMLSSWRKTREDQHVKERTAAVYADSMLSFSLTTAMYLVTFGIGASPFTNIEAARIFCCNSCIAIFFNYLYVLSFYGSSLVFTGYIENNYQHSIFCRKVPKPEALQEKPAWYRFLLTARFSEDTAEGEEANTYESHLLVCFLKRYYCDWITNTYVKPFVVLFYLIYISFALMGYLQVSEGSDLSNIVATATQTIEYTTAQQKYFSNYSPVIGFYIYESIEYWNTSVQEDVLEYTKGFVRISWFESYLNYLRKLNVSTGLPKKNFTDMLRNSFLKAPQFSHFQEDIIFSKKYNDEVDVVASRMFLVAKTMETNREELYDLLETLRRLSVTSKVKFIVFNPSFVYMDRYASSLGAPLHNSCISALFLLFFSAFLVADSLINVWITLTVVSVEFGVIGFMTLWKVELDCISVLCLIYGINYTIDNCAPMLSTFVLGKDFTRTKWVKNALEVHGVAILQSYLCYIVGLIPLAAVPSNLTCTLFRCLFLIAFVTFFHCFAILPVILTFLPPSKKKRKEKKNPENREEIECVEMVDIDSTRVVDQITTV</sequence>
<comment type="function">
    <text evidence="1 9">Required for the development and function of the thalamic reticular nucleus (TRN), a part of the thalamus that is critical for thalamocortical transmission, generation of sleep rhythms, sensorimotor processing and attention. Can bind cholesterol in vitro (PubMed:36769003).</text>
</comment>
<comment type="subcellular location">
    <subcellularLocation>
        <location evidence="4 8">Cell membrane</location>
        <topology evidence="4">Multi-pass membrane protein</topology>
    </subcellularLocation>
    <subcellularLocation>
        <location evidence="8">Cell projection</location>
        <location evidence="8">Dendritic spine</location>
    </subcellularLocation>
</comment>
<comment type="alternative products">
    <event type="alternative splicing"/>
    <isoform>
        <id>Q96NR3-1</id>
        <name>1</name>
        <sequence type="displayed"/>
    </isoform>
    <isoform>
        <id>Q96NR3-2</id>
        <name>2</name>
        <sequence type="described" ref="VSP_023511"/>
    </isoform>
    <isoform>
        <id>Q96NR3-3</id>
        <name>3</name>
        <sequence type="described" ref="VSP_023511 VSP_023512 VSP_023513"/>
    </isoform>
</comment>
<comment type="tissue specificity">
    <text evidence="4">Widely expressed, including in various regions of the brain with highest expression in the gray and white cerebellum, followed by the cerebellar vermis and the pituitary gland.</text>
</comment>
<comment type="disease" evidence="4 5 6">
    <disease id="DI-04536">
        <name>Autism, X-linked 4</name>
        <acronym>AUTSX4</acronym>
        <description>A complex multifactorial, pervasive developmental disorder characterized by impairments in reciprocal social interaction and communication, restricted and stereotyped patterns of interests and activities, and the presence of developmental abnormalities by 3 years of age. Most individuals with autism also manifest moderate intellectual disability.</description>
        <dbReference type="MIM" id="300830"/>
    </disease>
    <text>Disease susceptibility is associated with variants affecting the gene represented in this entry.</text>
</comment>
<comment type="similarity">
    <text evidence="13">Belongs to the patched family.</text>
</comment>
<dbReference type="EMBL" id="AK054858">
    <property type="protein sequence ID" value="BAB70816.1"/>
    <property type="molecule type" value="mRNA"/>
</dbReference>
<dbReference type="EMBL" id="AK298796">
    <property type="protein sequence ID" value="BAG60932.1"/>
    <property type="molecule type" value="mRNA"/>
</dbReference>
<dbReference type="EMBL" id="AC073910">
    <property type="status" value="NOT_ANNOTATED_CDS"/>
    <property type="molecule type" value="Genomic_DNA"/>
</dbReference>
<dbReference type="EMBL" id="BC062344">
    <property type="protein sequence ID" value="AAH62344.1"/>
    <property type="molecule type" value="mRNA"/>
</dbReference>
<dbReference type="EMBL" id="BC121061">
    <property type="protein sequence ID" value="AAI21062.1"/>
    <property type="molecule type" value="mRNA"/>
</dbReference>
<dbReference type="CCDS" id="CCDS35215.2">
    <molecule id="Q96NR3-1"/>
</dbReference>
<dbReference type="RefSeq" id="NP_775766.2">
    <molecule id="Q96NR3-1"/>
    <property type="nucleotide sequence ID" value="NM_173495.3"/>
</dbReference>
<dbReference type="RefSeq" id="XP_011543751.1">
    <molecule id="Q96NR3-1"/>
    <property type="nucleotide sequence ID" value="XM_011545449.4"/>
</dbReference>
<dbReference type="RefSeq" id="XP_054182456.1">
    <molecule id="Q96NR3-1"/>
    <property type="nucleotide sequence ID" value="XM_054326481.1"/>
</dbReference>
<dbReference type="SMR" id="Q96NR3"/>
<dbReference type="BioGRID" id="126564">
    <property type="interactions" value="2"/>
</dbReference>
<dbReference type="FunCoup" id="Q96NR3">
    <property type="interactions" value="253"/>
</dbReference>
<dbReference type="IntAct" id="Q96NR3">
    <property type="interactions" value="13"/>
</dbReference>
<dbReference type="MINT" id="Q96NR3"/>
<dbReference type="STRING" id="9606.ENSP00000368666"/>
<dbReference type="GlyCosmos" id="Q96NR3">
    <property type="glycosylation" value="10 sites, No reported glycans"/>
</dbReference>
<dbReference type="GlyGen" id="Q96NR3">
    <property type="glycosylation" value="10 sites, 2 N-linked glycans (2 sites)"/>
</dbReference>
<dbReference type="iPTMnet" id="Q96NR3"/>
<dbReference type="PhosphoSitePlus" id="Q96NR3"/>
<dbReference type="BioMuta" id="PTCHD1"/>
<dbReference type="DMDM" id="146331074"/>
<dbReference type="jPOST" id="Q96NR3"/>
<dbReference type="MassIVE" id="Q96NR3"/>
<dbReference type="PaxDb" id="9606-ENSP00000368666"/>
<dbReference type="PeptideAtlas" id="Q96NR3"/>
<dbReference type="Antibodypedia" id="55285">
    <property type="antibodies" value="85 antibodies from 20 providers"/>
</dbReference>
<dbReference type="DNASU" id="139411"/>
<dbReference type="Ensembl" id="ENST00000379361.5">
    <molecule id="Q96NR3-1"/>
    <property type="protein sequence ID" value="ENSP00000368666.4"/>
    <property type="gene ID" value="ENSG00000165186.12"/>
</dbReference>
<dbReference type="GeneID" id="139411"/>
<dbReference type="KEGG" id="hsa:139411"/>
<dbReference type="MANE-Select" id="ENST00000379361.5">
    <property type="protein sequence ID" value="ENSP00000368666.4"/>
    <property type="RefSeq nucleotide sequence ID" value="NM_173495.3"/>
    <property type="RefSeq protein sequence ID" value="NP_775766.2"/>
</dbReference>
<dbReference type="UCSC" id="uc064yif.1">
    <molecule id="Q96NR3-1"/>
    <property type="organism name" value="human"/>
</dbReference>
<dbReference type="AGR" id="HGNC:26392"/>
<dbReference type="CTD" id="139411"/>
<dbReference type="DisGeNET" id="139411"/>
<dbReference type="GeneCards" id="PTCHD1"/>
<dbReference type="HGNC" id="HGNC:26392">
    <property type="gene designation" value="PTCHD1"/>
</dbReference>
<dbReference type="HPA" id="ENSG00000165186">
    <property type="expression patterns" value="Tissue enhanced (brain, intestine)"/>
</dbReference>
<dbReference type="MalaCards" id="PTCHD1"/>
<dbReference type="MIM" id="300828">
    <property type="type" value="gene"/>
</dbReference>
<dbReference type="MIM" id="300830">
    <property type="type" value="phenotype"/>
</dbReference>
<dbReference type="neXtProt" id="NX_Q96NR3"/>
<dbReference type="OpenTargets" id="ENSG00000165186"/>
<dbReference type="Orphanet" id="777">
    <property type="disease" value="X-linked non-syndromic intellectual disability"/>
</dbReference>
<dbReference type="PharmGKB" id="PA134942420"/>
<dbReference type="VEuPathDB" id="HostDB:ENSG00000165186"/>
<dbReference type="eggNOG" id="KOG1934">
    <property type="taxonomic scope" value="Eukaryota"/>
</dbReference>
<dbReference type="GeneTree" id="ENSGT00940000157080"/>
<dbReference type="HOGENOM" id="CLU_1051839_0_0_1"/>
<dbReference type="InParanoid" id="Q96NR3"/>
<dbReference type="OMA" id="TMEYTAA"/>
<dbReference type="OrthoDB" id="10027883at2759"/>
<dbReference type="PAN-GO" id="Q96NR3">
    <property type="GO annotations" value="4 GO annotations based on evolutionary models"/>
</dbReference>
<dbReference type="PhylomeDB" id="Q96NR3"/>
<dbReference type="TreeFam" id="TF331806"/>
<dbReference type="PathwayCommons" id="Q96NR3"/>
<dbReference type="SIGNOR" id="Q96NR3"/>
<dbReference type="BioGRID-ORCS" id="139411">
    <property type="hits" value="9 hits in 763 CRISPR screens"/>
</dbReference>
<dbReference type="ChiTaRS" id="PTCHD1">
    <property type="organism name" value="human"/>
</dbReference>
<dbReference type="GenomeRNAi" id="139411"/>
<dbReference type="Pharos" id="Q96NR3">
    <property type="development level" value="Tbio"/>
</dbReference>
<dbReference type="PRO" id="PR:Q96NR3"/>
<dbReference type="Proteomes" id="UP000005640">
    <property type="component" value="Chromosome X"/>
</dbReference>
<dbReference type="RNAct" id="Q96NR3">
    <property type="molecule type" value="protein"/>
</dbReference>
<dbReference type="Bgee" id="ENSG00000165186">
    <property type="expression patterns" value="Expressed in cauda epididymis and 120 other cell types or tissues"/>
</dbReference>
<dbReference type="ExpressionAtlas" id="Q96NR3">
    <property type="expression patterns" value="baseline and differential"/>
</dbReference>
<dbReference type="GO" id="GO:0043197">
    <property type="term" value="C:dendritic spine"/>
    <property type="evidence" value="ECO:0000314"/>
    <property type="project" value="UniProtKB"/>
</dbReference>
<dbReference type="GO" id="GO:0005886">
    <property type="term" value="C:plasma membrane"/>
    <property type="evidence" value="ECO:0000314"/>
    <property type="project" value="UniProtKB"/>
</dbReference>
<dbReference type="GO" id="GO:0045202">
    <property type="term" value="C:synapse"/>
    <property type="evidence" value="ECO:0000318"/>
    <property type="project" value="GO_Central"/>
</dbReference>
<dbReference type="GO" id="GO:0007268">
    <property type="term" value="P:chemical synaptic transmission"/>
    <property type="evidence" value="ECO:0000318"/>
    <property type="project" value="GO_Central"/>
</dbReference>
<dbReference type="GO" id="GO:0050890">
    <property type="term" value="P:cognition"/>
    <property type="evidence" value="ECO:0000315"/>
    <property type="project" value="UniProtKB"/>
</dbReference>
<dbReference type="GO" id="GO:0098976">
    <property type="term" value="P:excitatory chemical synaptic transmission"/>
    <property type="evidence" value="ECO:0007669"/>
    <property type="project" value="Ensembl"/>
</dbReference>
<dbReference type="GO" id="GO:0098977">
    <property type="term" value="P:inhibitory chemical synaptic transmission"/>
    <property type="evidence" value="ECO:0007669"/>
    <property type="project" value="Ensembl"/>
</dbReference>
<dbReference type="GO" id="GO:0007616">
    <property type="term" value="P:long-term memory"/>
    <property type="evidence" value="ECO:0007669"/>
    <property type="project" value="Ensembl"/>
</dbReference>
<dbReference type="GO" id="GO:0007614">
    <property type="term" value="P:short-term memory"/>
    <property type="evidence" value="ECO:0007669"/>
    <property type="project" value="Ensembl"/>
</dbReference>
<dbReference type="GO" id="GO:0007224">
    <property type="term" value="P:smoothened signaling pathway"/>
    <property type="evidence" value="ECO:0000314"/>
    <property type="project" value="UniProtKB"/>
</dbReference>
<dbReference type="GO" id="GO:0035176">
    <property type="term" value="P:social behavior"/>
    <property type="evidence" value="ECO:0000250"/>
    <property type="project" value="UniProtKB"/>
</dbReference>
<dbReference type="GO" id="GO:0021794">
    <property type="term" value="P:thalamus development"/>
    <property type="evidence" value="ECO:0000250"/>
    <property type="project" value="UniProtKB"/>
</dbReference>
<dbReference type="FunFam" id="1.20.1640.10:FF:000016">
    <property type="entry name" value="Patched domain-containing protein 1"/>
    <property type="match status" value="1"/>
</dbReference>
<dbReference type="FunFam" id="1.20.1640.10:FF:000017">
    <property type="entry name" value="Patched domain-containing protein 1"/>
    <property type="match status" value="1"/>
</dbReference>
<dbReference type="Gene3D" id="1.20.1640.10">
    <property type="entry name" value="Multidrug efflux transporter AcrB transmembrane domain"/>
    <property type="match status" value="2"/>
</dbReference>
<dbReference type="InterPro" id="IPR051697">
    <property type="entry name" value="Patched_domain-protein"/>
</dbReference>
<dbReference type="InterPro" id="IPR003392">
    <property type="entry name" value="PTHD_SSD"/>
</dbReference>
<dbReference type="InterPro" id="IPR000731">
    <property type="entry name" value="SSD"/>
</dbReference>
<dbReference type="PANTHER" id="PTHR10796:SF36">
    <property type="entry name" value="PATCHED DOMAIN-CONTAINING PROTEIN 1"/>
    <property type="match status" value="1"/>
</dbReference>
<dbReference type="PANTHER" id="PTHR10796">
    <property type="entry name" value="PATCHED-RELATED"/>
    <property type="match status" value="1"/>
</dbReference>
<dbReference type="Pfam" id="PF02460">
    <property type="entry name" value="Patched"/>
    <property type="match status" value="1"/>
</dbReference>
<dbReference type="SUPFAM" id="SSF82866">
    <property type="entry name" value="Multidrug efflux transporter AcrB transmembrane domain"/>
    <property type="match status" value="2"/>
</dbReference>
<dbReference type="PROSITE" id="PS50156">
    <property type="entry name" value="SSD"/>
    <property type="match status" value="1"/>
</dbReference>
<evidence type="ECO:0000250" key="1">
    <source>
        <dbReference type="UniProtKB" id="Q14B62"/>
    </source>
</evidence>
<evidence type="ECO:0000255" key="2"/>
<evidence type="ECO:0000255" key="3">
    <source>
        <dbReference type="PROSITE-ProRule" id="PRU00199"/>
    </source>
</evidence>
<evidence type="ECO:0000269" key="4">
    <source>
    </source>
</evidence>
<evidence type="ECO:0000269" key="5">
    <source>
    </source>
</evidence>
<evidence type="ECO:0000269" key="6">
    <source>
    </source>
</evidence>
<evidence type="ECO:0000269" key="7">
    <source>
    </source>
</evidence>
<evidence type="ECO:0000269" key="8">
    <source>
    </source>
</evidence>
<evidence type="ECO:0000269" key="9">
    <source>
    </source>
</evidence>
<evidence type="ECO:0000269" key="10">
    <source>
    </source>
</evidence>
<evidence type="ECO:0000303" key="11">
    <source>
    </source>
</evidence>
<evidence type="ECO:0000303" key="12">
    <source>
    </source>
</evidence>
<evidence type="ECO:0000305" key="13"/>
<evidence type="ECO:0000312" key="14">
    <source>
        <dbReference type="HGNC" id="HGNC:26392"/>
    </source>
</evidence>
<feature type="chain" id="PRO_0000280040" description="Patched domain-containing protein 1">
    <location>
        <begin position="1"/>
        <end position="888"/>
    </location>
</feature>
<feature type="transmembrane region" description="Helical" evidence="2">
    <location>
        <begin position="20"/>
        <end position="40"/>
    </location>
</feature>
<feature type="transmembrane region" description="Helical" evidence="2">
    <location>
        <begin position="273"/>
        <end position="293"/>
    </location>
</feature>
<feature type="transmembrane region" description="Helical" evidence="2">
    <location>
        <begin position="298"/>
        <end position="318"/>
    </location>
</feature>
<feature type="transmembrane region" description="Helical" evidence="2">
    <location>
        <begin position="328"/>
        <end position="348"/>
    </location>
</feature>
<feature type="transmembrane region" description="Helical" evidence="2">
    <location>
        <begin position="373"/>
        <end position="393"/>
    </location>
</feature>
<feature type="transmembrane region" description="Helical" evidence="2">
    <location>
        <begin position="407"/>
        <end position="427"/>
    </location>
</feature>
<feature type="transmembrane region" description="Helical" evidence="2">
    <location>
        <begin position="502"/>
        <end position="522"/>
    </location>
</feature>
<feature type="transmembrane region" description="Helical" evidence="2">
    <location>
        <begin position="707"/>
        <end position="727"/>
    </location>
</feature>
<feature type="transmembrane region" description="Helical" evidence="2">
    <location>
        <begin position="738"/>
        <end position="758"/>
    </location>
</feature>
<feature type="transmembrane region" description="Helical" evidence="2">
    <location>
        <begin position="795"/>
        <end position="815"/>
    </location>
</feature>
<feature type="transmembrane region" description="Helical" evidence="2">
    <location>
        <begin position="826"/>
        <end position="846"/>
    </location>
</feature>
<feature type="domain" description="SSD" evidence="3">
    <location>
        <begin position="268"/>
        <end position="427"/>
    </location>
</feature>
<feature type="glycosylation site" description="N-linked (GlcNAc...) asparagine" evidence="2">
    <location>
        <position position="77"/>
    </location>
</feature>
<feature type="glycosylation site" description="N-linked (GlcNAc...) asparagine" evidence="2">
    <location>
        <position position="133"/>
    </location>
</feature>
<feature type="glycosylation site" description="N-linked (GlcNAc...) asparagine" evidence="2">
    <location>
        <position position="167"/>
    </location>
</feature>
<feature type="glycosylation site" description="N-linked (GlcNAc...) asparagine" evidence="2">
    <location>
        <position position="319"/>
    </location>
</feature>
<feature type="glycosylation site" description="N-linked (GlcNAc...) asparagine" evidence="2">
    <location>
        <position position="326"/>
    </location>
</feature>
<feature type="glycosylation site" description="N-linked (GlcNAc...) asparagine" evidence="2">
    <location>
        <position position="568"/>
    </location>
</feature>
<feature type="glycosylation site" description="N-linked (GlcNAc...) asparagine" evidence="2">
    <location>
        <position position="599"/>
    </location>
</feature>
<feature type="glycosylation site" description="N-linked (GlcNAc...) asparagine" evidence="2">
    <location>
        <position position="608"/>
    </location>
</feature>
<feature type="glycosylation site" description="N-linked (GlcNAc...) asparagine" evidence="2">
    <location>
        <position position="762"/>
    </location>
</feature>
<feature type="glycosylation site" description="N-linked (GlcNAc...) asparagine" evidence="2">
    <location>
        <position position="818"/>
    </location>
</feature>
<feature type="splice variant" id="VSP_023511" description="In isoform 2 and isoform 3." evidence="11 12">
    <location>
        <begin position="1"/>
        <end position="105"/>
    </location>
</feature>
<feature type="splice variant" id="VSP_023512" description="In isoform 3." evidence="12">
    <original>HGLYGTFEMLSSWRKTREDQHVK</original>
    <variation>NYYSSFFCFRLLVVLTRFLKGQE</variation>
    <location>
        <begin position="339"/>
        <end position="361"/>
    </location>
</feature>
<feature type="splice variant" id="VSP_023513" description="In isoform 3." evidence="12">
    <location>
        <begin position="362"/>
        <end position="888"/>
    </location>
</feature>
<feature type="sequence variant" id="VAR_089291" description="Found in a patient with a neurodevelopmental disorder; uncertain significance; decreased localization to cell membrane." evidence="8">
    <original>P</original>
    <variation>L</variation>
    <location>
        <position position="32"/>
    </location>
</feature>
<feature type="sequence variant" id="VAR_089292" description="Likely risk factor for AUTSX4; decreased localization to cell membrane; the orthologous mouse mutation results in defective post-translational processing and glycosylation; decreased protein half-life and stability; dbSNP:rs1569130365." evidence="8 10">
    <original>P</original>
    <variation>R</variation>
    <location>
        <position position="32"/>
    </location>
</feature>
<feature type="sequence variant" id="VAR_075876" description="Found in a patient with intellectual disability; uncertain significance; no effect on localization to cell membrane." evidence="6 8">
    <original>S</original>
    <variation>N</variation>
    <location>
        <position position="51"/>
    </location>
</feature>
<feature type="sequence variant" id="VAR_064872" description="No effect on localization to cell membrane; no effect on localization to dendritic spine; dbSNP:rs373105249." evidence="4 8">
    <original>L</original>
    <variation>F</variation>
    <location>
        <position position="73"/>
    </location>
</feature>
<feature type="sequence variant" id="VAR_075877" description="In dbSNP:rs371935424." evidence="6">
    <original>R</original>
    <variation>H</variation>
    <location>
        <position position="82"/>
    </location>
</feature>
<feature type="sequence variant" id="VAR_064873" description="No effect on localization to cell membrane; no effect on localization to dendritic spine; dbSNP:rs147324438." evidence="4 8">
    <original>I</original>
    <variation>V</variation>
    <location>
        <position position="173"/>
    </location>
</feature>
<feature type="sequence variant" id="VAR_089293" description="Found in a patient with frontal lissencephalic cortical dysplasia and seizures; uncertain significance; the orthologous mouse mutation has no effect on post-translational processing; decreased localization to cell membrane; dbSNP:rs1060499778." evidence="7 8 10">
    <original>K</original>
    <variation>T</variation>
    <location>
        <position position="181"/>
    </location>
</feature>
<feature type="sequence variant" id="VAR_064874" description="No effect on localization to cell membrane; no effect on localization to dendritic spine; dbSNP:rs769407241." evidence="4 8">
    <original>V</original>
    <variation>I</variation>
    <location>
        <position position="195"/>
    </location>
</feature>
<feature type="sequence variant" id="VAR_089294" description="Found in a patient with a neurodevelopmental disorder; uncertain significance; decreased localization to cell membrane." evidence="8">
    <original>Y</original>
    <variation>C</variation>
    <location>
        <position position="213"/>
    </location>
</feature>
<feature type="sequence variant" id="VAR_064875" evidence="4">
    <original>P</original>
    <variation>L</variation>
    <location>
        <position position="251"/>
    </location>
</feature>
<feature type="sequence variant" id="VAR_089295" description="Found in a patient with a neurodevelopmental disorder; uncertain significance; decreased localization to cell membrane; dbSNP:rs1922524280." evidence="8">
    <original>G</original>
    <variation>R</variation>
    <location>
        <position position="300"/>
    </location>
</feature>
<feature type="sequence variant" id="VAR_089296" description="Likely risk factor for AUTSX4; the orthologous mouse mutation results in defective post-translational processing and glycosylation; dbSNP:rs1060499615." evidence="10">
    <original>G</original>
    <variation>R</variation>
    <location>
        <position position="303"/>
    </location>
</feature>
<feature type="sequence variant" id="VAR_089297" description="Found in a patient with a neurodevelopmental disorder; uncertain significance; decreased localization to cell membrane." evidence="8">
    <original>A</original>
    <variation>P</variation>
    <location>
        <position position="310"/>
    </location>
</feature>
<feature type="sequence variant" id="VAR_064876" evidence="4">
    <original>ML</original>
    <variation>II</variation>
    <location>
        <begin position="336"/>
        <end position="337"/>
    </location>
</feature>
<feature type="sequence variant" id="VAR_064877" description="No effect on localization to cell membrane; no effect on localization to dendritic spine; dbSNP:rs1331109571." evidence="4 8">
    <original>H</original>
    <variation>R</variation>
    <location>
        <position position="359"/>
    </location>
</feature>
<feature type="sequence variant" id="VAR_064878" description="No effect on localization to cell membrane; no effect on localization to dendritic spine." evidence="4 8">
    <original>A</original>
    <variation>D</variation>
    <location>
        <position position="470"/>
    </location>
</feature>
<feature type="sequence variant" id="VAR_064879" description="No effect on localization to cell membrane; dbSNP:rs1922877073." evidence="4 8">
    <original>E</original>
    <variation>G</variation>
    <location>
        <position position="479"/>
    </location>
</feature>
<feature type="sequence variant" id="VAR_064880" description="In dbSNP:rs35880456." evidence="4 6">
    <original>N</original>
    <variation>K</variation>
    <location>
        <position position="497"/>
    </location>
</feature>
<feature type="sequence variant" id="VAR_075878" description="In dbSNP:rs1393748204." evidence="6">
    <original>V</original>
    <variation>A</variation>
    <location>
        <position position="882"/>
    </location>
</feature>
<feature type="sequence conflict" description="In Ref. 1; BAG60932." evidence="13" ref="1">
    <original>V</original>
    <variation>A</variation>
    <location>
        <position position="5"/>
    </location>
</feature>
<feature type="sequence conflict" description="In Ref. 1; BAB70816." evidence="13" ref="1">
    <original>W</original>
    <variation>R</variation>
    <location>
        <position position="587"/>
    </location>
</feature>
<feature type="sequence conflict" description="In Ref. 1; BAB70816." evidence="13" ref="1">
    <original>T</original>
    <variation>A</variation>
    <location>
        <position position="774"/>
    </location>
</feature>
<feature type="sequence conflict" description="In Ref. 1; BAG60932." evidence="13" ref="1">
    <original>D</original>
    <variation>V</variation>
    <location>
        <position position="883"/>
    </location>
</feature>
<name>PTHD1_HUMAN</name>
<organism>
    <name type="scientific">Homo sapiens</name>
    <name type="common">Human</name>
    <dbReference type="NCBI Taxonomy" id="9606"/>
    <lineage>
        <taxon>Eukaryota</taxon>
        <taxon>Metazoa</taxon>
        <taxon>Chordata</taxon>
        <taxon>Craniata</taxon>
        <taxon>Vertebrata</taxon>
        <taxon>Euteleostomi</taxon>
        <taxon>Mammalia</taxon>
        <taxon>Eutheria</taxon>
        <taxon>Euarchontoglires</taxon>
        <taxon>Primates</taxon>
        <taxon>Haplorrhini</taxon>
        <taxon>Catarrhini</taxon>
        <taxon>Hominidae</taxon>
        <taxon>Homo</taxon>
    </lineage>
</organism>
<keyword id="KW-0025">Alternative splicing</keyword>
<keyword id="KW-1269">Autism</keyword>
<keyword id="KW-1268">Autism spectrum disorder</keyword>
<keyword id="KW-1003">Cell membrane</keyword>
<keyword id="KW-0966">Cell projection</keyword>
<keyword id="KW-0225">Disease variant</keyword>
<keyword id="KW-0325">Glycoprotein</keyword>
<keyword id="KW-0472">Membrane</keyword>
<keyword id="KW-1267">Proteomics identification</keyword>
<keyword id="KW-1185">Reference proteome</keyword>
<keyword id="KW-0770">Synapse</keyword>
<keyword id="KW-0812">Transmembrane</keyword>
<keyword id="KW-1133">Transmembrane helix</keyword>
<reference key="1">
    <citation type="journal article" date="2004" name="Nat. Genet.">
        <title>Complete sequencing and characterization of 21,243 full-length human cDNAs.</title>
        <authorList>
            <person name="Ota T."/>
            <person name="Suzuki Y."/>
            <person name="Nishikawa T."/>
            <person name="Otsuki T."/>
            <person name="Sugiyama T."/>
            <person name="Irie R."/>
            <person name="Wakamatsu A."/>
            <person name="Hayashi K."/>
            <person name="Sato H."/>
            <person name="Nagai K."/>
            <person name="Kimura K."/>
            <person name="Makita H."/>
            <person name="Sekine M."/>
            <person name="Obayashi M."/>
            <person name="Nishi T."/>
            <person name="Shibahara T."/>
            <person name="Tanaka T."/>
            <person name="Ishii S."/>
            <person name="Yamamoto J."/>
            <person name="Saito K."/>
            <person name="Kawai Y."/>
            <person name="Isono Y."/>
            <person name="Nakamura Y."/>
            <person name="Nagahari K."/>
            <person name="Murakami K."/>
            <person name="Yasuda T."/>
            <person name="Iwayanagi T."/>
            <person name="Wagatsuma M."/>
            <person name="Shiratori A."/>
            <person name="Sudo H."/>
            <person name="Hosoiri T."/>
            <person name="Kaku Y."/>
            <person name="Kodaira H."/>
            <person name="Kondo H."/>
            <person name="Sugawara M."/>
            <person name="Takahashi M."/>
            <person name="Kanda K."/>
            <person name="Yokoi T."/>
            <person name="Furuya T."/>
            <person name="Kikkawa E."/>
            <person name="Omura Y."/>
            <person name="Abe K."/>
            <person name="Kamihara K."/>
            <person name="Katsuta N."/>
            <person name="Sato K."/>
            <person name="Tanikawa M."/>
            <person name="Yamazaki M."/>
            <person name="Ninomiya K."/>
            <person name="Ishibashi T."/>
            <person name="Yamashita H."/>
            <person name="Murakawa K."/>
            <person name="Fujimori K."/>
            <person name="Tanai H."/>
            <person name="Kimata M."/>
            <person name="Watanabe M."/>
            <person name="Hiraoka S."/>
            <person name="Chiba Y."/>
            <person name="Ishida S."/>
            <person name="Ono Y."/>
            <person name="Takiguchi S."/>
            <person name="Watanabe S."/>
            <person name="Yosida M."/>
            <person name="Hotuta T."/>
            <person name="Kusano J."/>
            <person name="Kanehori K."/>
            <person name="Takahashi-Fujii A."/>
            <person name="Hara H."/>
            <person name="Tanase T.-O."/>
            <person name="Nomura Y."/>
            <person name="Togiya S."/>
            <person name="Komai F."/>
            <person name="Hara R."/>
            <person name="Takeuchi K."/>
            <person name="Arita M."/>
            <person name="Imose N."/>
            <person name="Musashino K."/>
            <person name="Yuuki H."/>
            <person name="Oshima A."/>
            <person name="Sasaki N."/>
            <person name="Aotsuka S."/>
            <person name="Yoshikawa Y."/>
            <person name="Matsunawa H."/>
            <person name="Ichihara T."/>
            <person name="Shiohata N."/>
            <person name="Sano S."/>
            <person name="Moriya S."/>
            <person name="Momiyama H."/>
            <person name="Satoh N."/>
            <person name="Takami S."/>
            <person name="Terashima Y."/>
            <person name="Suzuki O."/>
            <person name="Nakagawa S."/>
            <person name="Senoh A."/>
            <person name="Mizoguchi H."/>
            <person name="Goto Y."/>
            <person name="Shimizu F."/>
            <person name="Wakebe H."/>
            <person name="Hishigaki H."/>
            <person name="Watanabe T."/>
            <person name="Sugiyama A."/>
            <person name="Takemoto M."/>
            <person name="Kawakami B."/>
            <person name="Yamazaki M."/>
            <person name="Watanabe K."/>
            <person name="Kumagai A."/>
            <person name="Itakura S."/>
            <person name="Fukuzumi Y."/>
            <person name="Fujimori Y."/>
            <person name="Komiyama M."/>
            <person name="Tashiro H."/>
            <person name="Tanigami A."/>
            <person name="Fujiwara T."/>
            <person name="Ono T."/>
            <person name="Yamada K."/>
            <person name="Fujii Y."/>
            <person name="Ozaki K."/>
            <person name="Hirao M."/>
            <person name="Ohmori Y."/>
            <person name="Kawabata A."/>
            <person name="Hikiji T."/>
            <person name="Kobatake N."/>
            <person name="Inagaki H."/>
            <person name="Ikema Y."/>
            <person name="Okamoto S."/>
            <person name="Okitani R."/>
            <person name="Kawakami T."/>
            <person name="Noguchi S."/>
            <person name="Itoh T."/>
            <person name="Shigeta K."/>
            <person name="Senba T."/>
            <person name="Matsumura K."/>
            <person name="Nakajima Y."/>
            <person name="Mizuno T."/>
            <person name="Morinaga M."/>
            <person name="Sasaki M."/>
            <person name="Togashi T."/>
            <person name="Oyama M."/>
            <person name="Hata H."/>
            <person name="Watanabe M."/>
            <person name="Komatsu T."/>
            <person name="Mizushima-Sugano J."/>
            <person name="Satoh T."/>
            <person name="Shirai Y."/>
            <person name="Takahashi Y."/>
            <person name="Nakagawa K."/>
            <person name="Okumura K."/>
            <person name="Nagase T."/>
            <person name="Nomura N."/>
            <person name="Kikuchi H."/>
            <person name="Masuho Y."/>
            <person name="Yamashita R."/>
            <person name="Nakai K."/>
            <person name="Yada T."/>
            <person name="Nakamura Y."/>
            <person name="Ohara O."/>
            <person name="Isogai T."/>
            <person name="Sugano S."/>
        </authorList>
    </citation>
    <scope>NUCLEOTIDE SEQUENCE [LARGE SCALE MRNA] (ISOFORMS 1 AND 2)</scope>
    <source>
        <tissue>Cerebellum</tissue>
        <tissue>Teratocarcinoma</tissue>
    </source>
</reference>
<reference key="2">
    <citation type="journal article" date="2005" name="Nature">
        <title>The DNA sequence of the human X chromosome.</title>
        <authorList>
            <person name="Ross M.T."/>
            <person name="Grafham D.V."/>
            <person name="Coffey A.J."/>
            <person name="Scherer S."/>
            <person name="McLay K."/>
            <person name="Muzny D."/>
            <person name="Platzer M."/>
            <person name="Howell G.R."/>
            <person name="Burrows C."/>
            <person name="Bird C.P."/>
            <person name="Frankish A."/>
            <person name="Lovell F.L."/>
            <person name="Howe K.L."/>
            <person name="Ashurst J.L."/>
            <person name="Fulton R.S."/>
            <person name="Sudbrak R."/>
            <person name="Wen G."/>
            <person name="Jones M.C."/>
            <person name="Hurles M.E."/>
            <person name="Andrews T.D."/>
            <person name="Scott C.E."/>
            <person name="Searle S."/>
            <person name="Ramser J."/>
            <person name="Whittaker A."/>
            <person name="Deadman R."/>
            <person name="Carter N.P."/>
            <person name="Hunt S.E."/>
            <person name="Chen R."/>
            <person name="Cree A."/>
            <person name="Gunaratne P."/>
            <person name="Havlak P."/>
            <person name="Hodgson A."/>
            <person name="Metzker M.L."/>
            <person name="Richards S."/>
            <person name="Scott G."/>
            <person name="Steffen D."/>
            <person name="Sodergren E."/>
            <person name="Wheeler D.A."/>
            <person name="Worley K.C."/>
            <person name="Ainscough R."/>
            <person name="Ambrose K.D."/>
            <person name="Ansari-Lari M.A."/>
            <person name="Aradhya S."/>
            <person name="Ashwell R.I."/>
            <person name="Babbage A.K."/>
            <person name="Bagguley C.L."/>
            <person name="Ballabio A."/>
            <person name="Banerjee R."/>
            <person name="Barker G.E."/>
            <person name="Barlow K.F."/>
            <person name="Barrett I.P."/>
            <person name="Bates K.N."/>
            <person name="Beare D.M."/>
            <person name="Beasley H."/>
            <person name="Beasley O."/>
            <person name="Beck A."/>
            <person name="Bethel G."/>
            <person name="Blechschmidt K."/>
            <person name="Brady N."/>
            <person name="Bray-Allen S."/>
            <person name="Bridgeman A.M."/>
            <person name="Brown A.J."/>
            <person name="Brown M.J."/>
            <person name="Bonnin D."/>
            <person name="Bruford E.A."/>
            <person name="Buhay C."/>
            <person name="Burch P."/>
            <person name="Burford D."/>
            <person name="Burgess J."/>
            <person name="Burrill W."/>
            <person name="Burton J."/>
            <person name="Bye J.M."/>
            <person name="Carder C."/>
            <person name="Carrel L."/>
            <person name="Chako J."/>
            <person name="Chapman J.C."/>
            <person name="Chavez D."/>
            <person name="Chen E."/>
            <person name="Chen G."/>
            <person name="Chen Y."/>
            <person name="Chen Z."/>
            <person name="Chinault C."/>
            <person name="Ciccodicola A."/>
            <person name="Clark S.Y."/>
            <person name="Clarke G."/>
            <person name="Clee C.M."/>
            <person name="Clegg S."/>
            <person name="Clerc-Blankenburg K."/>
            <person name="Clifford K."/>
            <person name="Cobley V."/>
            <person name="Cole C.G."/>
            <person name="Conquer J.S."/>
            <person name="Corby N."/>
            <person name="Connor R.E."/>
            <person name="David R."/>
            <person name="Davies J."/>
            <person name="Davis C."/>
            <person name="Davis J."/>
            <person name="Delgado O."/>
            <person name="Deshazo D."/>
            <person name="Dhami P."/>
            <person name="Ding Y."/>
            <person name="Dinh H."/>
            <person name="Dodsworth S."/>
            <person name="Draper H."/>
            <person name="Dugan-Rocha S."/>
            <person name="Dunham A."/>
            <person name="Dunn M."/>
            <person name="Durbin K.J."/>
            <person name="Dutta I."/>
            <person name="Eades T."/>
            <person name="Ellwood M."/>
            <person name="Emery-Cohen A."/>
            <person name="Errington H."/>
            <person name="Evans K.L."/>
            <person name="Faulkner L."/>
            <person name="Francis F."/>
            <person name="Frankland J."/>
            <person name="Fraser A.E."/>
            <person name="Galgoczy P."/>
            <person name="Gilbert J."/>
            <person name="Gill R."/>
            <person name="Gloeckner G."/>
            <person name="Gregory S.G."/>
            <person name="Gribble S."/>
            <person name="Griffiths C."/>
            <person name="Grocock R."/>
            <person name="Gu Y."/>
            <person name="Gwilliam R."/>
            <person name="Hamilton C."/>
            <person name="Hart E.A."/>
            <person name="Hawes A."/>
            <person name="Heath P.D."/>
            <person name="Heitmann K."/>
            <person name="Hennig S."/>
            <person name="Hernandez J."/>
            <person name="Hinzmann B."/>
            <person name="Ho S."/>
            <person name="Hoffs M."/>
            <person name="Howden P.J."/>
            <person name="Huckle E.J."/>
            <person name="Hume J."/>
            <person name="Hunt P.J."/>
            <person name="Hunt A.R."/>
            <person name="Isherwood J."/>
            <person name="Jacob L."/>
            <person name="Johnson D."/>
            <person name="Jones S."/>
            <person name="de Jong P.J."/>
            <person name="Joseph S.S."/>
            <person name="Keenan S."/>
            <person name="Kelly S."/>
            <person name="Kershaw J.K."/>
            <person name="Khan Z."/>
            <person name="Kioschis P."/>
            <person name="Klages S."/>
            <person name="Knights A.J."/>
            <person name="Kosiura A."/>
            <person name="Kovar-Smith C."/>
            <person name="Laird G.K."/>
            <person name="Langford C."/>
            <person name="Lawlor S."/>
            <person name="Leversha M."/>
            <person name="Lewis L."/>
            <person name="Liu W."/>
            <person name="Lloyd C."/>
            <person name="Lloyd D.M."/>
            <person name="Loulseged H."/>
            <person name="Loveland J.E."/>
            <person name="Lovell J.D."/>
            <person name="Lozado R."/>
            <person name="Lu J."/>
            <person name="Lyne R."/>
            <person name="Ma J."/>
            <person name="Maheshwari M."/>
            <person name="Matthews L.H."/>
            <person name="McDowall J."/>
            <person name="McLaren S."/>
            <person name="McMurray A."/>
            <person name="Meidl P."/>
            <person name="Meitinger T."/>
            <person name="Milne S."/>
            <person name="Miner G."/>
            <person name="Mistry S.L."/>
            <person name="Morgan M."/>
            <person name="Morris S."/>
            <person name="Mueller I."/>
            <person name="Mullikin J.C."/>
            <person name="Nguyen N."/>
            <person name="Nordsiek G."/>
            <person name="Nyakatura G."/>
            <person name="O'dell C.N."/>
            <person name="Okwuonu G."/>
            <person name="Palmer S."/>
            <person name="Pandian R."/>
            <person name="Parker D."/>
            <person name="Parrish J."/>
            <person name="Pasternak S."/>
            <person name="Patel D."/>
            <person name="Pearce A.V."/>
            <person name="Pearson D.M."/>
            <person name="Pelan S.E."/>
            <person name="Perez L."/>
            <person name="Porter K.M."/>
            <person name="Ramsey Y."/>
            <person name="Reichwald K."/>
            <person name="Rhodes S."/>
            <person name="Ridler K.A."/>
            <person name="Schlessinger D."/>
            <person name="Schueler M.G."/>
            <person name="Sehra H.K."/>
            <person name="Shaw-Smith C."/>
            <person name="Shen H."/>
            <person name="Sheridan E.M."/>
            <person name="Shownkeen R."/>
            <person name="Skuce C.D."/>
            <person name="Smith M.L."/>
            <person name="Sotheran E.C."/>
            <person name="Steingruber H.E."/>
            <person name="Steward C.A."/>
            <person name="Storey R."/>
            <person name="Swann R.M."/>
            <person name="Swarbreck D."/>
            <person name="Tabor P.E."/>
            <person name="Taudien S."/>
            <person name="Taylor T."/>
            <person name="Teague B."/>
            <person name="Thomas K."/>
            <person name="Thorpe A."/>
            <person name="Timms K."/>
            <person name="Tracey A."/>
            <person name="Trevanion S."/>
            <person name="Tromans A.C."/>
            <person name="d'Urso M."/>
            <person name="Verduzco D."/>
            <person name="Villasana D."/>
            <person name="Waldron L."/>
            <person name="Wall M."/>
            <person name="Wang Q."/>
            <person name="Warren J."/>
            <person name="Warry G.L."/>
            <person name="Wei X."/>
            <person name="West A."/>
            <person name="Whitehead S.L."/>
            <person name="Whiteley M.N."/>
            <person name="Wilkinson J.E."/>
            <person name="Willey D.L."/>
            <person name="Williams G."/>
            <person name="Williams L."/>
            <person name="Williamson A."/>
            <person name="Williamson H."/>
            <person name="Wilming L."/>
            <person name="Woodmansey R.L."/>
            <person name="Wray P.W."/>
            <person name="Yen J."/>
            <person name="Zhang J."/>
            <person name="Zhou J."/>
            <person name="Zoghbi H."/>
            <person name="Zorilla S."/>
            <person name="Buck D."/>
            <person name="Reinhardt R."/>
            <person name="Poustka A."/>
            <person name="Rosenthal A."/>
            <person name="Lehrach H."/>
            <person name="Meindl A."/>
            <person name="Minx P.J."/>
            <person name="Hillier L.W."/>
            <person name="Willard H.F."/>
            <person name="Wilson R.K."/>
            <person name="Waterston R.H."/>
            <person name="Rice C.M."/>
            <person name="Vaudin M."/>
            <person name="Coulson A."/>
            <person name="Nelson D.L."/>
            <person name="Weinstock G."/>
            <person name="Sulston J.E."/>
            <person name="Durbin R.M."/>
            <person name="Hubbard T."/>
            <person name="Gibbs R.A."/>
            <person name="Beck S."/>
            <person name="Rogers J."/>
            <person name="Bentley D.R."/>
        </authorList>
    </citation>
    <scope>NUCLEOTIDE SEQUENCE [LARGE SCALE GENOMIC DNA]</scope>
</reference>
<reference key="3">
    <citation type="journal article" date="2004" name="Genome Res.">
        <title>The status, quality, and expansion of the NIH full-length cDNA project: the Mammalian Gene Collection (MGC).</title>
        <authorList>
            <consortium name="The MGC Project Team"/>
        </authorList>
    </citation>
    <scope>NUCLEOTIDE SEQUENCE [LARGE SCALE MRNA] (ISOFORMS 2 AND 3)</scope>
    <source>
        <tissue>Ovary</tissue>
    </source>
</reference>
<reference key="4">
    <citation type="journal article" date="2023" name="Int. J. Mol. Sci.">
        <title>PTCHD1 binds cholesterol but not Sonic Hedgehog, suggesting a distinct cellular function.</title>
        <authorList>
            <person name="Hiltunen M.K."/>
            <person name="Timmis A.J."/>
            <person name="Thomsen M."/>
            <person name="Gkotsi D.S."/>
            <person name="Iwai H."/>
            <person name="Ribeiro O.M."/>
            <person name="Goldman A."/>
            <person name="Riobo-Del Galdo N.A."/>
        </authorList>
    </citation>
    <scope>FUNCTION</scope>
</reference>
<reference key="5">
    <citation type="journal article" date="2010" name="Sci. Transl. Med.">
        <title>Disruption at the PTCHD1 Locus on Xp22.11 in Autism spectrum disorder and intellectual disability.</title>
        <authorList>
            <person name="Noor A."/>
            <person name="Whibley A."/>
            <person name="Marshall C.R."/>
            <person name="Gianakopoulos P.J."/>
            <person name="Piton A."/>
            <person name="Carson A.R."/>
            <person name="Orlic-Milacic M."/>
            <person name="Lionel A.C."/>
            <person name="Sato D."/>
            <person name="Pinto D."/>
            <person name="Drmic I."/>
            <person name="Noakes C."/>
            <person name="Senman L."/>
            <person name="Zhang X."/>
            <person name="Mo R."/>
            <person name="Gauthier J."/>
            <person name="Crosbie J."/>
            <person name="Pagnamenta A.T."/>
            <person name="Munson J."/>
            <person name="Estes A.M."/>
            <person name="Fiebig A."/>
            <person name="Franke A."/>
            <person name="Schreiber S."/>
            <person name="Stewart A.F."/>
            <person name="Roberts R."/>
            <person name="McPherson R."/>
            <person name="Guter S.J."/>
            <person name="Cook E.H. Jr."/>
            <person name="Dawson G."/>
            <person name="Schellenberg G.D."/>
            <person name="Battaglia A."/>
            <person name="Maestrini E."/>
            <person name="Jeng L."/>
            <person name="Hutchison T."/>
            <person name="Rajcan-Separovic E."/>
            <person name="Chudley A.E."/>
            <person name="Lewis S.M."/>
            <person name="Liu X."/>
            <person name="Holden J.J."/>
            <person name="Fernandez B."/>
            <person name="Zwaigenbaum L."/>
            <person name="Bryson S.E."/>
            <person name="Roberts W."/>
            <person name="Szatmari P."/>
            <person name="Gallagher L."/>
            <person name="Stratton M.R."/>
            <person name="Gecz J."/>
            <person name="Brady A.F."/>
            <person name="Schwartz C.E."/>
            <person name="Schachar R.J."/>
            <person name="Monaco A.P."/>
            <person name="Rouleau G.A."/>
            <person name="Hui C.C."/>
            <person name="Lucy Raymond F."/>
            <person name="Scherer S.W."/>
            <person name="Vincent J.B."/>
        </authorList>
    </citation>
    <scope>INVOLVEMENT IN AUTSX4</scope>
    <scope>SUBCELLULAR LOCATION</scope>
    <scope>TISSUE SPECIFICITY</scope>
    <scope>VARIANTS PHE-73; VAL-173; ILE-195; LEU-251; 336-MET-LEU-337 DELINS ILE-ILE; ARG-359; ASP-470; GLY-479 AND LYS-497</scope>
</reference>
<reference key="6">
    <citation type="journal article" date="2015" name="Clin. Genet.">
        <title>Phenotypic spectrum associated with PTCHD1 deletions and truncating mutations includes intellectual disability and autism spectrum disorder.</title>
        <authorList>
            <person name="Chaudhry A."/>
            <person name="Noor A."/>
            <person name="Degagne B."/>
            <person name="Baker K."/>
            <person name="Bok L.A."/>
            <person name="Brady A.F."/>
            <person name="Chitayat D."/>
            <person name="Chung B.H."/>
            <person name="Cytrynbaum C."/>
            <person name="Dyment D."/>
            <person name="Filges I."/>
            <person name="Helm B."/>
            <person name="Hutchison H.T."/>
            <person name="Jeng L.J."/>
            <person name="Laumonnier F."/>
            <person name="Marshall C.R."/>
            <person name="Menzel M."/>
            <person name="Parkash S."/>
            <person name="Parker M.J."/>
            <person name="Raymond L.F."/>
            <person name="Rideout A.L."/>
            <person name="Roberts W."/>
            <person name="Rupps R."/>
            <person name="Schanze I."/>
            <person name="Schrander-Stumpel C.T."/>
            <person name="Speevak M.D."/>
            <person name="Stavropoulos D.J."/>
            <person name="Stevens S.J."/>
            <person name="Thomas E.R."/>
            <person name="Toutain A."/>
            <person name="Vergano S."/>
            <person name="Weksberg R."/>
            <person name="Scherer S.W."/>
            <person name="Vincent J.B."/>
            <person name="Carter M.T."/>
        </authorList>
    </citation>
    <scope>INVOLVEMENT IN AUTSX4</scope>
</reference>
<reference key="7">
    <citation type="journal article" date="2015" name="Eur. J. Hum. Genet.">
        <title>Contribution of common and rare variants of the PTCHD1 gene to autism spectrum disorders and intellectual disability.</title>
        <authorList>
            <person name="Torrico B."/>
            <person name="Fernandez-Castillo N."/>
            <person name="Hervas A."/>
            <person name="Mila M."/>
            <person name="Salgado M."/>
            <person name="Rueda I."/>
            <person name="Buitelaar J.K."/>
            <person name="Rommelse N."/>
            <person name="Oerlemans A.M."/>
            <person name="Bralten J."/>
            <person name="Freitag C.M."/>
            <person name="Reif A."/>
            <person name="Battaglia A."/>
            <person name="Mazzone L."/>
            <person name="Maestrini E."/>
            <person name="Cormand B."/>
            <person name="Toma C."/>
        </authorList>
    </citation>
    <scope>INVOLVEMENT IN AUTSX4</scope>
    <scope>VARIANTS ASN-51; HIS-82; LYS-497 AND ALA-882</scope>
</reference>
<reference key="8">
    <citation type="journal article" date="2015" name="Neuron">
        <title>Genes that affect brain structure and function identified by rare variant analyses of mendelian neurologic disease.</title>
        <authorList>
            <person name="Karaca E."/>
            <person name="Harel T."/>
            <person name="Pehlivan D."/>
            <person name="Jhangiani S.N."/>
            <person name="Gambin T."/>
            <person name="Coban Akdemir Z."/>
            <person name="Gonzaga-Jauregui C."/>
            <person name="Erdin S."/>
            <person name="Bayram Y."/>
            <person name="Campbell I.M."/>
            <person name="Hunter J.V."/>
            <person name="Atik M.M."/>
            <person name="Van Esch H."/>
            <person name="Yuan B."/>
            <person name="Wiszniewski W."/>
            <person name="Isikay S."/>
            <person name="Yesil G."/>
            <person name="Yuregir O.O."/>
            <person name="Tug Bozdogan S."/>
            <person name="Aslan H."/>
            <person name="Aydin H."/>
            <person name="Tos T."/>
            <person name="Aksoy A."/>
            <person name="De Vivo D.C."/>
            <person name="Jain P."/>
            <person name="Geckinli B.B."/>
            <person name="Sezer O."/>
            <person name="Gul D."/>
            <person name="Durmaz B."/>
            <person name="Cogulu O."/>
            <person name="Ozkinay F."/>
            <person name="Topcu V."/>
            <person name="Candan S."/>
            <person name="Cebi A.H."/>
            <person name="Ikbal M."/>
            <person name="Yilmaz Gulec E."/>
            <person name="Gezdirici A."/>
            <person name="Koparir E."/>
            <person name="Ekici F."/>
            <person name="Coskun S."/>
            <person name="Cicek S."/>
            <person name="Karaer K."/>
            <person name="Koparir A."/>
            <person name="Duz M.B."/>
            <person name="Kirat E."/>
            <person name="Fenercioglu E."/>
            <person name="Ulucan H."/>
            <person name="Seven M."/>
            <person name="Guran T."/>
            <person name="Elcioglu N."/>
            <person name="Yildirim M.S."/>
            <person name="Aktas D."/>
            <person name="Alikasifoglu M."/>
            <person name="Ture M."/>
            <person name="Yakut T."/>
            <person name="Overton J.D."/>
            <person name="Yuksel A."/>
            <person name="Ozen M."/>
            <person name="Muzny D.M."/>
            <person name="Adams D.R."/>
            <person name="Boerwinkle E."/>
            <person name="Chung W.K."/>
            <person name="Gibbs R.A."/>
            <person name="Lupski J.R."/>
        </authorList>
    </citation>
    <scope>VARIANT THR-181</scope>
</reference>
<reference key="9">
    <citation type="journal article" date="2021" name="Hum. Mutat.">
        <title>Novel missense mutations in PTCHD1 alter its plasma membrane subcellular localization and cause intellectual disability and autism spectrum disorder.</title>
        <authorList>
            <person name="Halewa J."/>
            <person name="Marouillat S."/>
            <person name="Dixneuf M."/>
            <person name="Thepault R.A."/>
            <person name="Ung D.C."/>
            <person name="Chatron N."/>
            <person name="Gerard B."/>
            <person name="Ghoumid J."/>
            <person name="Lesca G."/>
            <person name="Till M."/>
            <person name="Smol T."/>
            <person name="Couque N."/>
            <person name="Ruaud L."/>
            <person name="Chune V."/>
            <person name="Grotto S."/>
            <person name="Verloes A."/>
            <person name="Vuillaume M.L."/>
            <person name="Toutain A."/>
            <person name="Raynaud M."/>
            <person name="Laumonnier F."/>
        </authorList>
    </citation>
    <scope>VARIANTS LEU-32; ARG-32; CYS-213; ARG-300 AND PRO-310</scope>
    <scope>CHARACTERIZATION OF VARIANTS LEU-32; ARG-32; ASN-51; PHE-73; VAL-173; THR-181; ILE-195; CYS-213; ARG-300; PRO-310; ARG-359; ASP-470 AND GLY-479</scope>
    <scope>SUBCELLULAR LOCATION</scope>
</reference>
<reference key="10">
    <citation type="journal article" date="2024" name="Cells">
        <title>Nonsynonymous mutations in intellectual disability and autism spectrum disorder gene PTCHD1 disrupt N-glycosylation and reduce protein stability.</title>
        <authorList>
            <person name="Xie C.T.Y."/>
            <person name="Pastore S.F."/>
            <person name="Vincent J.B."/>
            <person name="Frankland P.W."/>
            <person name="Hamel P.A."/>
        </authorList>
    </citation>
    <scope>VARIANTS ARG-32; THR-181 AND ARG-303</scope>
    <scope>CHARACTERIZATION OF VARIANTS ARG-32; THR-181 AND ARG-303</scope>
</reference>
<proteinExistence type="evidence at protein level"/>
<protein>
    <recommendedName>
        <fullName evidence="13">Patched domain-containing protein 1</fullName>
    </recommendedName>
</protein>